<keyword id="KW-0150">Chloroplast</keyword>
<keyword id="KW-0249">Electron transport</keyword>
<keyword id="KW-0349">Heme</keyword>
<keyword id="KW-0408">Iron</keyword>
<keyword id="KW-0472">Membrane</keyword>
<keyword id="KW-0479">Metal-binding</keyword>
<keyword id="KW-0602">Photosynthesis</keyword>
<keyword id="KW-0604">Photosystem II</keyword>
<keyword id="KW-0934">Plastid</keyword>
<keyword id="KW-0793">Thylakoid</keyword>
<keyword id="KW-0812">Transmembrane</keyword>
<keyword id="KW-1133">Transmembrane helix</keyword>
<keyword id="KW-0813">Transport</keyword>
<accession>Q06RB6</accession>
<feature type="chain" id="PRO_0000275732" description="Cytochrome b559 subunit beta">
    <location>
        <begin position="1"/>
        <end position="39"/>
    </location>
</feature>
<feature type="transmembrane region" description="Helical" evidence="1">
    <location>
        <begin position="14"/>
        <end position="30"/>
    </location>
</feature>
<feature type="binding site" description="axial binding residue" evidence="1">
    <location>
        <position position="18"/>
    </location>
    <ligand>
        <name>heme</name>
        <dbReference type="ChEBI" id="CHEBI:30413"/>
        <note>ligand shared with alpha subunit</note>
    </ligand>
    <ligandPart>
        <name>Fe</name>
        <dbReference type="ChEBI" id="CHEBI:18248"/>
    </ligandPart>
</feature>
<protein>
    <recommendedName>
        <fullName evidence="1">Cytochrome b559 subunit beta</fullName>
    </recommendedName>
    <alternativeName>
        <fullName evidence="1">PSII reaction center subunit VI</fullName>
    </alternativeName>
</protein>
<name>PSBF_JASNU</name>
<comment type="function">
    <text evidence="1">This b-type cytochrome is tightly associated with the reaction center of photosystem II (PSII). PSII is a light-driven water:plastoquinone oxidoreductase that uses light energy to abstract electrons from H(2)O, generating O(2) and a proton gradient subsequently used for ATP formation. It consists of a core antenna complex that captures photons, and an electron transfer chain that converts photonic excitation into a charge separation.</text>
</comment>
<comment type="cofactor">
    <cofactor evidence="1">
        <name>heme b</name>
        <dbReference type="ChEBI" id="CHEBI:60344"/>
    </cofactor>
    <text evidence="1">With its partner (PsbE) binds heme. PSII binds additional chlorophylls, carotenoids and specific lipids.</text>
</comment>
<comment type="subunit">
    <text evidence="1">Heterodimer of an alpha subunit and a beta subunit. PSII is composed of 1 copy each of membrane proteins PsbA, PsbB, PsbC, PsbD, PsbE, PsbF, PsbH, PsbI, PsbJ, PsbK, PsbL, PsbM, PsbT, PsbX, PsbY, PsbZ, Psb30/Ycf12, at least 3 peripheral proteins of the oxygen-evolving complex and a large number of cofactors. It forms dimeric complexes.</text>
</comment>
<comment type="subcellular location">
    <subcellularLocation>
        <location evidence="1">Plastid</location>
        <location evidence="1">Chloroplast thylakoid membrane</location>
        <topology evidence="1">Single-pass membrane protein</topology>
    </subcellularLocation>
</comment>
<comment type="similarity">
    <text evidence="1">Belongs to the PsbE/PsbF family.</text>
</comment>
<sequence length="39" mass="4484">MTIDRTYPIFTVRWLAVHGLAVPTVFFLGSISAMQFIQR</sequence>
<dbReference type="EMBL" id="DQ673255">
    <property type="protein sequence ID" value="ABG74643.1"/>
    <property type="molecule type" value="Genomic_DNA"/>
</dbReference>
<dbReference type="RefSeq" id="YP_778505.1">
    <property type="nucleotide sequence ID" value="NC_008407.1"/>
</dbReference>
<dbReference type="SMR" id="Q06RB6"/>
<dbReference type="GeneID" id="4319774"/>
<dbReference type="GO" id="GO:0009535">
    <property type="term" value="C:chloroplast thylakoid membrane"/>
    <property type="evidence" value="ECO:0007669"/>
    <property type="project" value="UniProtKB-SubCell"/>
</dbReference>
<dbReference type="GO" id="GO:0009539">
    <property type="term" value="C:photosystem II reaction center"/>
    <property type="evidence" value="ECO:0007669"/>
    <property type="project" value="InterPro"/>
</dbReference>
<dbReference type="GO" id="GO:0009055">
    <property type="term" value="F:electron transfer activity"/>
    <property type="evidence" value="ECO:0007669"/>
    <property type="project" value="UniProtKB-UniRule"/>
</dbReference>
<dbReference type="GO" id="GO:0020037">
    <property type="term" value="F:heme binding"/>
    <property type="evidence" value="ECO:0007669"/>
    <property type="project" value="InterPro"/>
</dbReference>
<dbReference type="GO" id="GO:0005506">
    <property type="term" value="F:iron ion binding"/>
    <property type="evidence" value="ECO:0007669"/>
    <property type="project" value="UniProtKB-UniRule"/>
</dbReference>
<dbReference type="GO" id="GO:0009767">
    <property type="term" value="P:photosynthetic electron transport chain"/>
    <property type="evidence" value="ECO:0007669"/>
    <property type="project" value="InterPro"/>
</dbReference>
<dbReference type="HAMAP" id="MF_00643">
    <property type="entry name" value="PSII_PsbF"/>
    <property type="match status" value="1"/>
</dbReference>
<dbReference type="InterPro" id="IPR006241">
    <property type="entry name" value="PSII_cyt_b559_bsu"/>
</dbReference>
<dbReference type="InterPro" id="IPR006216">
    <property type="entry name" value="PSII_cyt_b559_CS"/>
</dbReference>
<dbReference type="InterPro" id="IPR013081">
    <property type="entry name" value="PSII_cyt_b559_N"/>
</dbReference>
<dbReference type="NCBIfam" id="TIGR01333">
    <property type="entry name" value="cyt_b559_beta"/>
    <property type="match status" value="1"/>
</dbReference>
<dbReference type="Pfam" id="PF00283">
    <property type="entry name" value="Cytochrom_B559"/>
    <property type="match status" value="1"/>
</dbReference>
<dbReference type="PIRSF" id="PIRSF000037">
    <property type="entry name" value="PsbF"/>
    <property type="match status" value="1"/>
</dbReference>
<dbReference type="SUPFAM" id="SSF161045">
    <property type="entry name" value="Cytochrome b559 subunits"/>
    <property type="match status" value="1"/>
</dbReference>
<dbReference type="PROSITE" id="PS00537">
    <property type="entry name" value="CYTOCHROME_B559"/>
    <property type="match status" value="1"/>
</dbReference>
<evidence type="ECO:0000255" key="1">
    <source>
        <dbReference type="HAMAP-Rule" id="MF_00643"/>
    </source>
</evidence>
<gene>
    <name evidence="1" type="primary">psbF</name>
    <name type="ORF">JNC0700</name>
</gene>
<geneLocation type="chloroplast"/>
<proteinExistence type="inferred from homology"/>
<organism>
    <name type="scientific">Jasminum nudiflorum</name>
    <name type="common">Winter jasmine</name>
    <dbReference type="NCBI Taxonomy" id="126431"/>
    <lineage>
        <taxon>Eukaryota</taxon>
        <taxon>Viridiplantae</taxon>
        <taxon>Streptophyta</taxon>
        <taxon>Embryophyta</taxon>
        <taxon>Tracheophyta</taxon>
        <taxon>Spermatophyta</taxon>
        <taxon>Magnoliopsida</taxon>
        <taxon>eudicotyledons</taxon>
        <taxon>Gunneridae</taxon>
        <taxon>Pentapetalae</taxon>
        <taxon>asterids</taxon>
        <taxon>lamiids</taxon>
        <taxon>Lamiales</taxon>
        <taxon>Oleaceae</taxon>
        <taxon>Jasmineae</taxon>
        <taxon>Jasminum</taxon>
    </lineage>
</organism>
<reference key="1">
    <citation type="journal article" date="2007" name="Mol. Biol. Evol.">
        <title>Gene relocations within chloroplast genomes of Jasminum and Menodora (Oleaceae) are due to multiple, overlapping inversions.</title>
        <authorList>
            <person name="Lee H.-L."/>
            <person name="Jansen R.K."/>
            <person name="Chumley T.W."/>
            <person name="Kim K.-J."/>
        </authorList>
    </citation>
    <scope>NUCLEOTIDE SEQUENCE [LARGE SCALE GENOMIC DNA]</scope>
</reference>